<protein>
    <recommendedName>
        <fullName>CASP-like protein 2U2</fullName>
        <shortName>PaCASPL2U2</shortName>
    </recommendedName>
</protein>
<dbReference type="SMR" id="P0DI28"/>
<dbReference type="GO" id="GO:0005886">
    <property type="term" value="C:plasma membrane"/>
    <property type="evidence" value="ECO:0007669"/>
    <property type="project" value="UniProtKB-SubCell"/>
</dbReference>
<dbReference type="InterPro" id="IPR006459">
    <property type="entry name" value="CASP/CASPL"/>
</dbReference>
<dbReference type="InterPro" id="IPR006702">
    <property type="entry name" value="CASP_dom"/>
</dbReference>
<dbReference type="NCBIfam" id="TIGR01569">
    <property type="entry name" value="A_tha_TIGR01569"/>
    <property type="match status" value="1"/>
</dbReference>
<dbReference type="PANTHER" id="PTHR33573">
    <property type="entry name" value="CASP-LIKE PROTEIN 4A4"/>
    <property type="match status" value="1"/>
</dbReference>
<dbReference type="Pfam" id="PF04535">
    <property type="entry name" value="CASP_dom"/>
    <property type="match status" value="1"/>
</dbReference>
<keyword id="KW-1003">Cell membrane</keyword>
<keyword id="KW-0472">Membrane</keyword>
<keyword id="KW-0812">Transmembrane</keyword>
<keyword id="KW-1133">Transmembrane helix</keyword>
<name>CSPL7_PTEAA</name>
<comment type="subunit">
    <text evidence="1">Homodimer and heterodimers.</text>
</comment>
<comment type="subcellular location">
    <subcellularLocation>
        <location evidence="1">Cell membrane</location>
        <topology evidence="1">Multi-pass membrane protein</topology>
    </subcellularLocation>
</comment>
<comment type="similarity">
    <text evidence="3">Belongs to the Casparian strip membrane proteins (CASP) family.</text>
</comment>
<reference key="1">
    <citation type="journal article" date="2011" name="BMC Genomics">
        <title>De novo characterization of the gametophyte transcriptome in bracken fern, Pteridium aquilinum.</title>
        <authorList>
            <person name="Der J.P."/>
            <person name="Barker M.S."/>
            <person name="Wickett N.J."/>
            <person name="dePamphilis C.W."/>
            <person name="Wolf P.G."/>
        </authorList>
    </citation>
    <scope>NUCLEOTIDE SEQUENCE [LARGE SCALE MRNA]</scope>
    <source>
        <strain>Wolf 83</strain>
        <tissue>Gametophyte</tissue>
    </source>
</reference>
<reference key="2">
    <citation type="journal article" date="2014" name="Plant Physiol.">
        <title>Functional and evolutionary analysis of the CASPARIAN STRIP MEMBRANE DOMAIN PROTEIN family.</title>
        <authorList>
            <person name="Roppolo D."/>
            <person name="Boeckmann B."/>
            <person name="Pfister A."/>
            <person name="Boutet E."/>
            <person name="Rubio M.C."/>
            <person name="Denervaud-Tendon V."/>
            <person name="Vermeer J.E."/>
            <person name="Gheyselinck J."/>
            <person name="Xenarios I."/>
            <person name="Geldner N."/>
        </authorList>
    </citation>
    <scope>GENE FAMILY</scope>
    <scope>NOMENCLATURE</scope>
</reference>
<organism>
    <name type="scientific">Pteridium aquilinum subsp. aquilinum</name>
    <name type="common">Bracken fern</name>
    <dbReference type="NCBI Taxonomy" id="104588"/>
    <lineage>
        <taxon>Eukaryota</taxon>
        <taxon>Viridiplantae</taxon>
        <taxon>Streptophyta</taxon>
        <taxon>Embryophyta</taxon>
        <taxon>Tracheophyta</taxon>
        <taxon>Polypodiopsida</taxon>
        <taxon>Polypodiidae</taxon>
        <taxon>Polypodiales</taxon>
        <taxon>Dennstaedtiineae</taxon>
        <taxon>Dennstaedtiaceae</taxon>
        <taxon>Pteridium</taxon>
    </lineage>
</organism>
<gene>
    <name type="ORF">PtaqContig974</name>
</gene>
<proteinExistence type="inferred from homology"/>
<feature type="chain" id="PRO_0000417800" description="CASP-like protein 2U2">
    <location>
        <begin position="1"/>
        <end position="190"/>
    </location>
</feature>
<feature type="topological domain" description="Cytoplasmic" evidence="2">
    <location>
        <begin position="1"/>
        <end position="10"/>
    </location>
</feature>
<feature type="transmembrane region" description="Helical" evidence="2">
    <location>
        <begin position="11"/>
        <end position="31"/>
    </location>
</feature>
<feature type="topological domain" description="Extracellular" evidence="2">
    <location>
        <begin position="32"/>
        <end position="59"/>
    </location>
</feature>
<feature type="transmembrane region" description="Helical" evidence="2">
    <location>
        <begin position="60"/>
        <end position="80"/>
    </location>
</feature>
<feature type="topological domain" description="Cytoplasmic" evidence="2">
    <location>
        <begin position="81"/>
        <end position="94"/>
    </location>
</feature>
<feature type="transmembrane region" description="Helical" evidence="2">
    <location>
        <begin position="95"/>
        <end position="115"/>
    </location>
</feature>
<feature type="topological domain" description="Extracellular" evidence="2">
    <location>
        <begin position="116"/>
        <end position="144"/>
    </location>
</feature>
<feature type="transmembrane region" description="Helical" evidence="2">
    <location>
        <begin position="145"/>
        <end position="165"/>
    </location>
</feature>
<feature type="topological domain" description="Cytoplasmic" evidence="2">
    <location>
        <begin position="166"/>
        <end position="190"/>
    </location>
</feature>
<sequence>MGEKMQGFQGWSIGIRFLTSCVSIASLILLLKSKQTVQVSVGLDYVTQQVKYSDTSAFVYLVFSDILVAVYCIVVLVGLIPAALGKSHPGKAGQWAIFIFDQVLAYVLLAAASSATEVAYLADKGMAKTSWEAVCPRFAHFCHTVMASISLSFVAVLLLALLAVVSASGLFGRFYRRPLFAVKMRHNTLI</sequence>
<accession>P0DI28</accession>
<evidence type="ECO:0000250" key="1"/>
<evidence type="ECO:0000255" key="2"/>
<evidence type="ECO:0000305" key="3"/>